<protein>
    <recommendedName>
        <fullName>D(2)-like dopamine receptor</fullName>
    </recommendedName>
</protein>
<accession>P53453</accession>
<dbReference type="EMBL" id="X80175">
    <property type="protein sequence ID" value="CAA56456.1"/>
    <property type="molecule type" value="Genomic_DNA"/>
</dbReference>
<dbReference type="RefSeq" id="XP_003968417.1">
    <property type="nucleotide sequence ID" value="XM_003968368.2"/>
</dbReference>
<dbReference type="SMR" id="P53453"/>
<dbReference type="FunCoup" id="P53453">
    <property type="interactions" value="404"/>
</dbReference>
<dbReference type="STRING" id="31033.ENSTRUP00000037539"/>
<dbReference type="GlyCosmos" id="P53453">
    <property type="glycosylation" value="3 sites, No reported glycans"/>
</dbReference>
<dbReference type="Ensembl" id="ENSTRUT00000037674.3">
    <property type="protein sequence ID" value="ENSTRUP00000037539.3"/>
    <property type="gene ID" value="ENSTRUG00000014690.3"/>
</dbReference>
<dbReference type="GeneID" id="101074274"/>
<dbReference type="KEGG" id="tru:101074274"/>
<dbReference type="CTD" id="282557"/>
<dbReference type="eggNOG" id="KOG3656">
    <property type="taxonomic scope" value="Eukaryota"/>
</dbReference>
<dbReference type="GeneTree" id="ENSGT00940000155539"/>
<dbReference type="InParanoid" id="P53453"/>
<dbReference type="OMA" id="NTHCTRC"/>
<dbReference type="OrthoDB" id="10034726at2759"/>
<dbReference type="Proteomes" id="UP000005226">
    <property type="component" value="Chromosome 11"/>
</dbReference>
<dbReference type="GO" id="GO:0098978">
    <property type="term" value="C:glutamatergic synapse"/>
    <property type="evidence" value="ECO:0007669"/>
    <property type="project" value="TreeGrafter"/>
</dbReference>
<dbReference type="GO" id="GO:0042734">
    <property type="term" value="C:presynaptic membrane"/>
    <property type="evidence" value="ECO:0007669"/>
    <property type="project" value="TreeGrafter"/>
</dbReference>
<dbReference type="GO" id="GO:0001591">
    <property type="term" value="F:dopamine neurotransmitter receptor activity, coupled via Gi/Go"/>
    <property type="evidence" value="ECO:0007669"/>
    <property type="project" value="TreeGrafter"/>
</dbReference>
<dbReference type="GO" id="GO:0004930">
    <property type="term" value="F:G protein-coupled receptor activity"/>
    <property type="evidence" value="ECO:0007669"/>
    <property type="project" value="UniProtKB-KW"/>
</dbReference>
<dbReference type="GO" id="GO:0007195">
    <property type="term" value="P:adenylate cyclase-inhibiting dopamine receptor signaling pathway"/>
    <property type="evidence" value="ECO:0007669"/>
    <property type="project" value="InterPro"/>
</dbReference>
<dbReference type="GO" id="GO:0071875">
    <property type="term" value="P:adrenergic receptor signaling pathway"/>
    <property type="evidence" value="ECO:0007669"/>
    <property type="project" value="UniProtKB-ARBA"/>
</dbReference>
<dbReference type="GO" id="GO:0051481">
    <property type="term" value="P:negative regulation of cytosolic calcium ion concentration"/>
    <property type="evidence" value="ECO:0007669"/>
    <property type="project" value="TreeGrafter"/>
</dbReference>
<dbReference type="GO" id="GO:1904057">
    <property type="term" value="P:negative regulation of sensory perception of pain"/>
    <property type="evidence" value="ECO:0007669"/>
    <property type="project" value="Ensembl"/>
</dbReference>
<dbReference type="GO" id="GO:0051967">
    <property type="term" value="P:negative regulation of synaptic transmission, glutamatergic"/>
    <property type="evidence" value="ECO:0007669"/>
    <property type="project" value="TreeGrafter"/>
</dbReference>
<dbReference type="GO" id="GO:0060158">
    <property type="term" value="P:phospholipase C-activating dopamine receptor signaling pathway"/>
    <property type="evidence" value="ECO:0007669"/>
    <property type="project" value="TreeGrafter"/>
</dbReference>
<dbReference type="GO" id="GO:0014059">
    <property type="term" value="P:regulation of dopamine secretion"/>
    <property type="evidence" value="ECO:0007669"/>
    <property type="project" value="TreeGrafter"/>
</dbReference>
<dbReference type="GO" id="GO:0043266">
    <property type="term" value="P:regulation of potassium ion transport"/>
    <property type="evidence" value="ECO:0007669"/>
    <property type="project" value="TreeGrafter"/>
</dbReference>
<dbReference type="CDD" id="cd15309">
    <property type="entry name" value="7tmA_D2_dopamine_R"/>
    <property type="match status" value="1"/>
</dbReference>
<dbReference type="FunFam" id="1.20.1070.10:FF:000396">
    <property type="entry name" value="D(2) dopamine receptor A"/>
    <property type="match status" value="1"/>
</dbReference>
<dbReference type="FunFam" id="1.20.1070.10:FF:000086">
    <property type="entry name" value="Dopamine D2 receptor 2"/>
    <property type="match status" value="1"/>
</dbReference>
<dbReference type="Gene3D" id="1.20.1070.10">
    <property type="entry name" value="Rhodopsin 7-helix transmembrane proteins"/>
    <property type="match status" value="2"/>
</dbReference>
<dbReference type="InterPro" id="IPR001922">
    <property type="entry name" value="Dopamine_D2_rcpt"/>
</dbReference>
<dbReference type="InterPro" id="IPR000929">
    <property type="entry name" value="Dopamine_rcpt"/>
</dbReference>
<dbReference type="InterPro" id="IPR000276">
    <property type="entry name" value="GPCR_Rhodpsn"/>
</dbReference>
<dbReference type="InterPro" id="IPR017452">
    <property type="entry name" value="GPCR_Rhodpsn_7TM"/>
</dbReference>
<dbReference type="PANTHER" id="PTHR24248">
    <property type="entry name" value="ADRENERGIC RECEPTOR-RELATED G-PROTEIN COUPLED RECEPTOR"/>
    <property type="match status" value="1"/>
</dbReference>
<dbReference type="PANTHER" id="PTHR24248:SF87">
    <property type="entry name" value="D(2) DOPAMINE RECEPTOR"/>
    <property type="match status" value="1"/>
</dbReference>
<dbReference type="Pfam" id="PF00001">
    <property type="entry name" value="7tm_1"/>
    <property type="match status" value="1"/>
</dbReference>
<dbReference type="PRINTS" id="PR00567">
    <property type="entry name" value="DOPAMINED2R"/>
</dbReference>
<dbReference type="PRINTS" id="PR00242">
    <property type="entry name" value="DOPAMINER"/>
</dbReference>
<dbReference type="PRINTS" id="PR00237">
    <property type="entry name" value="GPCRRHODOPSN"/>
</dbReference>
<dbReference type="SMART" id="SM01381">
    <property type="entry name" value="7TM_GPCR_Srsx"/>
    <property type="match status" value="1"/>
</dbReference>
<dbReference type="SUPFAM" id="SSF81321">
    <property type="entry name" value="Family A G protein-coupled receptor-like"/>
    <property type="match status" value="1"/>
</dbReference>
<dbReference type="PROSITE" id="PS00237">
    <property type="entry name" value="G_PROTEIN_RECEP_F1_1"/>
    <property type="match status" value="1"/>
</dbReference>
<dbReference type="PROSITE" id="PS50262">
    <property type="entry name" value="G_PROTEIN_RECEP_F1_2"/>
    <property type="match status" value="1"/>
</dbReference>
<name>DRD2L_TAKRU</name>
<comment type="function">
    <text>Receptor for dopamine.</text>
</comment>
<comment type="subcellular location">
    <subcellularLocation>
        <location>Cell membrane</location>
        <topology>Multi-pass membrane protein</topology>
    </subcellularLocation>
</comment>
<comment type="similarity">
    <text evidence="3">Belongs to the G-protein coupled receptor 1 family.</text>
</comment>
<organism>
    <name type="scientific">Takifugu rubripes</name>
    <name type="common">Japanese pufferfish</name>
    <name type="synonym">Fugu rubripes</name>
    <dbReference type="NCBI Taxonomy" id="31033"/>
    <lineage>
        <taxon>Eukaryota</taxon>
        <taxon>Metazoa</taxon>
        <taxon>Chordata</taxon>
        <taxon>Craniata</taxon>
        <taxon>Vertebrata</taxon>
        <taxon>Euteleostomi</taxon>
        <taxon>Actinopterygii</taxon>
        <taxon>Neopterygii</taxon>
        <taxon>Teleostei</taxon>
        <taxon>Neoteleostei</taxon>
        <taxon>Acanthomorphata</taxon>
        <taxon>Eupercaria</taxon>
        <taxon>Tetraodontiformes</taxon>
        <taxon>Tetradontoidea</taxon>
        <taxon>Tetraodontidae</taxon>
        <taxon>Takifugu</taxon>
    </lineage>
</organism>
<evidence type="ECO:0000250" key="1"/>
<evidence type="ECO:0000255" key="2"/>
<evidence type="ECO:0000255" key="3">
    <source>
        <dbReference type="PROSITE-ProRule" id="PRU00521"/>
    </source>
</evidence>
<evidence type="ECO:0000256" key="4">
    <source>
        <dbReference type="SAM" id="MobiDB-lite"/>
    </source>
</evidence>
<proteinExistence type="inferred from homology"/>
<gene>
    <name type="primary">d215</name>
</gene>
<feature type="chain" id="PRO_0000069392" description="D(2)-like dopamine receptor">
    <location>
        <begin position="1"/>
        <end position="463"/>
    </location>
</feature>
<feature type="topological domain" description="Extracellular" evidence="1">
    <location>
        <begin position="1"/>
        <end position="35"/>
    </location>
</feature>
<feature type="transmembrane region" description="Helical; Name=1" evidence="1">
    <location>
        <begin position="36"/>
        <end position="58"/>
    </location>
</feature>
<feature type="topological domain" description="Cytoplasmic" evidence="1">
    <location>
        <begin position="59"/>
        <end position="68"/>
    </location>
</feature>
<feature type="transmembrane region" description="Helical; Name=2" evidence="1">
    <location>
        <begin position="69"/>
        <end position="91"/>
    </location>
</feature>
<feature type="topological domain" description="Extracellular" evidence="1">
    <location>
        <begin position="92"/>
        <end position="106"/>
    </location>
</feature>
<feature type="transmembrane region" description="Helical; Name=3" evidence="1">
    <location>
        <begin position="107"/>
        <end position="128"/>
    </location>
</feature>
<feature type="topological domain" description="Cytoplasmic" evidence="1">
    <location>
        <begin position="129"/>
        <end position="149"/>
    </location>
</feature>
<feature type="transmembrane region" description="Helical; Name=4" evidence="1">
    <location>
        <begin position="150"/>
        <end position="170"/>
    </location>
</feature>
<feature type="topological domain" description="Extracellular" evidence="1">
    <location>
        <begin position="171"/>
        <end position="189"/>
    </location>
</feature>
<feature type="transmembrane region" description="Helical; Name=5" evidence="1">
    <location>
        <begin position="190"/>
        <end position="214"/>
    </location>
</feature>
<feature type="topological domain" description="Cytoplasmic" evidence="1">
    <location>
        <begin position="215"/>
        <end position="392"/>
    </location>
</feature>
<feature type="transmembrane region" description="Helical; Name=6" evidence="1">
    <location>
        <begin position="393"/>
        <end position="414"/>
    </location>
</feature>
<feature type="topological domain" description="Extracellular" evidence="1">
    <location>
        <begin position="415"/>
        <end position="429"/>
    </location>
</feature>
<feature type="transmembrane region" description="Helical; Name=7" evidence="1">
    <location>
        <begin position="430"/>
        <end position="451"/>
    </location>
</feature>
<feature type="topological domain" description="Cytoplasmic" evidence="1">
    <location>
        <begin position="452"/>
        <end position="463"/>
    </location>
</feature>
<feature type="region of interest" description="Disordered" evidence="4">
    <location>
        <begin position="295"/>
        <end position="362"/>
    </location>
</feature>
<feature type="compositionally biased region" description="Polar residues" evidence="4">
    <location>
        <begin position="315"/>
        <end position="329"/>
    </location>
</feature>
<feature type="compositionally biased region" description="Basic and acidic residues" evidence="4">
    <location>
        <begin position="341"/>
        <end position="353"/>
    </location>
</feature>
<feature type="glycosylation site" description="N-linked (GlcNAc...) asparagine" evidence="2">
    <location>
        <position position="10"/>
    </location>
</feature>
<feature type="glycosylation site" description="N-linked (GlcNAc...) asparagine" evidence="2">
    <location>
        <position position="16"/>
    </location>
</feature>
<feature type="glycosylation site" description="N-linked (GlcNAc...) asparagine" evidence="2">
    <location>
        <position position="22"/>
    </location>
</feature>
<feature type="disulfide bond" evidence="3">
    <location>
        <begin position="105"/>
        <end position="183"/>
    </location>
</feature>
<feature type="disulfide bond" evidence="3">
    <location>
        <begin position="418"/>
        <end position="421"/>
    </location>
</feature>
<sequence length="463" mass="52120">MDVFTQYAYNDSIFDNGTWSANETTKDETHPYNYYAMLLTLLIFVIVFGNVLVCMAVSREKALQTTTNYLIVSLAVADLLVATLVMPWVVYLEVVGEWRFSKIHCDIFVTLDVMMCTASILNLCAISIDRYTAVAMPMLYNTRYSSRRRVTVMISVVWVLSFAISCPLLFGLNNTATRDQSLCFIANPAFVVYSSIVSFYVPFIVTLLVYVQIYVVLRKRRKRVNTKPKQRLCQAADPDIPTSLKDKCTHPEDVRLCTMIVKSNGSFPVNKKKVIFIKDGVNEVEGLELDELNYCGGSHKQPPPQQQPRALGDTPATSHQLLMSTKANASPTSTPPTPPEEGQRTEKNGDPTKEAQGNPAPVVALRNGKTQTSLKTLSKRKISQQKEKKATQMLAIVLGVFIICWLPFFITHILNTHCTRCKVPAEMYNAFTWLGYVNSAVNPIIYTTFNVEFRKAFIKILHC</sequence>
<reference key="1">
    <citation type="journal article" date="1995" name="Genomics">
        <title>Analysis of the dopamine receptor family in the compact genome of the puffer fish Fugu rubripes.</title>
        <authorList>
            <person name="Machae A.D."/>
            <person name="Brenner S."/>
        </authorList>
    </citation>
    <scope>NUCLEOTIDE SEQUENCE [GENOMIC DNA]</scope>
</reference>
<keyword id="KW-1003">Cell membrane</keyword>
<keyword id="KW-1015">Disulfide bond</keyword>
<keyword id="KW-0297">G-protein coupled receptor</keyword>
<keyword id="KW-0325">Glycoprotein</keyword>
<keyword id="KW-0472">Membrane</keyword>
<keyword id="KW-0675">Receptor</keyword>
<keyword id="KW-1185">Reference proteome</keyword>
<keyword id="KW-0807">Transducer</keyword>
<keyword id="KW-0812">Transmembrane</keyword>
<keyword id="KW-1133">Transmembrane helix</keyword>